<evidence type="ECO:0000255" key="1">
    <source>
        <dbReference type="HAMAP-Rule" id="MF_00391"/>
    </source>
</evidence>
<evidence type="ECO:0000305" key="2"/>
<keyword id="KW-0687">Ribonucleoprotein</keyword>
<keyword id="KW-0689">Ribosomal protein</keyword>
<protein>
    <recommendedName>
        <fullName evidence="1">Large ribosomal subunit protein bL34</fullName>
    </recommendedName>
    <alternativeName>
        <fullName evidence="2">50S ribosomal protein L34</fullName>
    </alternativeName>
</protein>
<sequence>MKRTYQPSKIVRKRRHGFRARMATTGGRKVLAARRTRGRKRLSA</sequence>
<proteinExistence type="inferred from homology"/>
<organism>
    <name type="scientific">Brucella ovis (strain ATCC 25840 / 63/290 / NCTC 10512)</name>
    <dbReference type="NCBI Taxonomy" id="444178"/>
    <lineage>
        <taxon>Bacteria</taxon>
        <taxon>Pseudomonadati</taxon>
        <taxon>Pseudomonadota</taxon>
        <taxon>Alphaproteobacteria</taxon>
        <taxon>Hyphomicrobiales</taxon>
        <taxon>Brucellaceae</taxon>
        <taxon>Brucella/Ochrobactrum group</taxon>
        <taxon>Brucella</taxon>
    </lineage>
</organism>
<name>RL34_BRUO2</name>
<feature type="chain" id="PRO_1000013291" description="Large ribosomal subunit protein bL34">
    <location>
        <begin position="1"/>
        <end position="44"/>
    </location>
</feature>
<reference key="1">
    <citation type="journal article" date="2009" name="PLoS ONE">
        <title>Genome degradation in Brucella ovis corresponds with narrowing of its host range and tissue tropism.</title>
        <authorList>
            <person name="Tsolis R.M."/>
            <person name="Seshadri R."/>
            <person name="Santos R.L."/>
            <person name="Sangari F.J."/>
            <person name="Lobo J.M."/>
            <person name="de Jong M.F."/>
            <person name="Ren Q."/>
            <person name="Myers G."/>
            <person name="Brinkac L.M."/>
            <person name="Nelson W.C."/>
            <person name="Deboy R.T."/>
            <person name="Angiuoli S."/>
            <person name="Khouri H."/>
            <person name="Dimitrov G."/>
            <person name="Robinson J.R."/>
            <person name="Mulligan S."/>
            <person name="Walker R.L."/>
            <person name="Elzer P.E."/>
            <person name="Hassan K.A."/>
            <person name="Paulsen I.T."/>
        </authorList>
    </citation>
    <scope>NUCLEOTIDE SEQUENCE [LARGE SCALE GENOMIC DNA]</scope>
    <source>
        <strain>ATCC 25840 / 63/290 / NCTC 10512</strain>
    </source>
</reference>
<gene>
    <name evidence="1" type="primary">rpmH</name>
    <name type="ordered locus">BOV_A0962</name>
</gene>
<dbReference type="EMBL" id="CP000709">
    <property type="protein sequence ID" value="ABQ62216.1"/>
    <property type="molecule type" value="Genomic_DNA"/>
</dbReference>
<dbReference type="RefSeq" id="WP_002965629.1">
    <property type="nucleotide sequence ID" value="NC_009504.1"/>
</dbReference>
<dbReference type="SMR" id="A5VVS7"/>
<dbReference type="GeneID" id="97534928"/>
<dbReference type="KEGG" id="bov:BOV_A0962"/>
<dbReference type="HOGENOM" id="CLU_129938_2_0_5"/>
<dbReference type="Proteomes" id="UP000006383">
    <property type="component" value="Chromosome II"/>
</dbReference>
<dbReference type="GO" id="GO:1990904">
    <property type="term" value="C:ribonucleoprotein complex"/>
    <property type="evidence" value="ECO:0007669"/>
    <property type="project" value="UniProtKB-KW"/>
</dbReference>
<dbReference type="GO" id="GO:0005840">
    <property type="term" value="C:ribosome"/>
    <property type="evidence" value="ECO:0007669"/>
    <property type="project" value="UniProtKB-KW"/>
</dbReference>
<dbReference type="GO" id="GO:0003735">
    <property type="term" value="F:structural constituent of ribosome"/>
    <property type="evidence" value="ECO:0007669"/>
    <property type="project" value="InterPro"/>
</dbReference>
<dbReference type="GO" id="GO:0006412">
    <property type="term" value="P:translation"/>
    <property type="evidence" value="ECO:0007669"/>
    <property type="project" value="UniProtKB-UniRule"/>
</dbReference>
<dbReference type="FunFam" id="1.10.287.3980:FF:000001">
    <property type="entry name" value="Mitochondrial ribosomal protein L34"/>
    <property type="match status" value="1"/>
</dbReference>
<dbReference type="Gene3D" id="1.10.287.3980">
    <property type="match status" value="1"/>
</dbReference>
<dbReference type="HAMAP" id="MF_00391">
    <property type="entry name" value="Ribosomal_bL34"/>
    <property type="match status" value="1"/>
</dbReference>
<dbReference type="InterPro" id="IPR000271">
    <property type="entry name" value="Ribosomal_bL34"/>
</dbReference>
<dbReference type="InterPro" id="IPR020939">
    <property type="entry name" value="Ribosomal_bL34_CS"/>
</dbReference>
<dbReference type="NCBIfam" id="TIGR01030">
    <property type="entry name" value="rpmH_bact"/>
    <property type="match status" value="1"/>
</dbReference>
<dbReference type="PANTHER" id="PTHR14503:SF4">
    <property type="entry name" value="LARGE RIBOSOMAL SUBUNIT PROTEIN BL34M"/>
    <property type="match status" value="1"/>
</dbReference>
<dbReference type="PANTHER" id="PTHR14503">
    <property type="entry name" value="MITOCHONDRIAL RIBOSOMAL PROTEIN 34 FAMILY MEMBER"/>
    <property type="match status" value="1"/>
</dbReference>
<dbReference type="Pfam" id="PF00468">
    <property type="entry name" value="Ribosomal_L34"/>
    <property type="match status" value="1"/>
</dbReference>
<dbReference type="PROSITE" id="PS00784">
    <property type="entry name" value="RIBOSOMAL_L34"/>
    <property type="match status" value="1"/>
</dbReference>
<comment type="similarity">
    <text evidence="1">Belongs to the bacterial ribosomal protein bL34 family.</text>
</comment>
<accession>A5VVS7</accession>